<sequence>MAEDAPVVQQTMLEPEVLLKKRKVNERTRKERVEQAIAKKEAQKKNRKETFKRAETFINNYRQRERERIRLNRSAKNKGDIFVPDETKLLFVIRIAGVKNMPPKIRKVLRLLRLSRINNAVFVRNNKAVAQMLRIVEPYVMYGIPNLHSVRELIYKRGFGKINGQRIALSDNALIEEALGKYDVISIEDIIHEIYNVGSHFKEVTKFLWPFTLTPVKHSLMEKKVKHFNEGRKAGYCGEEINELIKKQV</sequence>
<evidence type="ECO:0000250" key="1">
    <source>
        <dbReference type="UniProtKB" id="P05737"/>
    </source>
</evidence>
<evidence type="ECO:0000269" key="2">
    <source>
    </source>
</evidence>
<evidence type="ECO:0000305" key="3"/>
<evidence type="ECO:0007829" key="4">
    <source>
        <dbReference type="PDB" id="8ETG"/>
    </source>
</evidence>
<evidence type="ECO:0007829" key="5">
    <source>
        <dbReference type="PDB" id="8EUY"/>
    </source>
</evidence>
<evidence type="ECO:0007829" key="6">
    <source>
        <dbReference type="PDB" id="8EV3"/>
    </source>
</evidence>
<feature type="chain" id="PRO_0000104647" description="Large ribosomal subunit protein uL30A">
    <location>
        <begin position="1"/>
        <end position="249"/>
    </location>
</feature>
<feature type="strand" evidence="4">
    <location>
        <begin position="16"/>
        <end position="19"/>
    </location>
</feature>
<feature type="helix" evidence="4">
    <location>
        <begin position="26"/>
        <end position="46"/>
    </location>
</feature>
<feature type="helix" evidence="5">
    <location>
        <begin position="54"/>
        <end position="72"/>
    </location>
</feature>
<feature type="strand" evidence="6">
    <location>
        <begin position="88"/>
        <end position="94"/>
    </location>
</feature>
<feature type="helix" evidence="6">
    <location>
        <begin position="103"/>
        <end position="111"/>
    </location>
</feature>
<feature type="strand" evidence="6">
    <location>
        <begin position="119"/>
        <end position="124"/>
    </location>
</feature>
<feature type="helix" evidence="6">
    <location>
        <begin position="127"/>
        <end position="135"/>
    </location>
</feature>
<feature type="turn" evidence="6">
    <location>
        <begin position="136"/>
        <end position="139"/>
    </location>
</feature>
<feature type="strand" evidence="6">
    <location>
        <begin position="140"/>
        <end position="143"/>
    </location>
</feature>
<feature type="helix" evidence="6">
    <location>
        <begin position="147"/>
        <end position="157"/>
    </location>
</feature>
<feature type="strand" evidence="6">
    <location>
        <begin position="159"/>
        <end position="162"/>
    </location>
</feature>
<feature type="strand" evidence="6">
    <location>
        <begin position="165"/>
        <end position="168"/>
    </location>
</feature>
<feature type="helix" evidence="6">
    <location>
        <begin position="172"/>
        <end position="178"/>
    </location>
</feature>
<feature type="turn" evidence="6">
    <location>
        <begin position="179"/>
        <end position="183"/>
    </location>
</feature>
<feature type="helix" evidence="6">
    <location>
        <begin position="187"/>
        <end position="196"/>
    </location>
</feature>
<feature type="helix" evidence="6">
    <location>
        <begin position="201"/>
        <end position="207"/>
    </location>
</feature>
<feature type="turn" evidence="4">
    <location>
        <begin position="220"/>
        <end position="224"/>
    </location>
</feature>
<feature type="strand" evidence="6">
    <location>
        <begin position="234"/>
        <end position="238"/>
    </location>
</feature>
<feature type="helix" evidence="6">
    <location>
        <begin position="240"/>
        <end position="248"/>
    </location>
</feature>
<protein>
    <recommendedName>
        <fullName evidence="3">Large ribosomal subunit protein uL30A</fullName>
    </recommendedName>
    <alternativeName>
        <fullName>60S ribosomal protein L7-A</fullName>
    </alternativeName>
</protein>
<keyword id="KW-0002">3D-structure</keyword>
<keyword id="KW-0963">Cytoplasm</keyword>
<keyword id="KW-0539">Nucleus</keyword>
<keyword id="KW-1185">Reference proteome</keyword>
<keyword id="KW-0687">Ribonucleoprotein</keyword>
<keyword id="KW-0689">Ribosomal protein</keyword>
<accession>P17937</accession>
<reference key="1">
    <citation type="journal article" date="1990" name="Nucleic Acids Res.">
        <title>Isolation of a Schizosaccharomyces pombe homologue to the rat ribosomal protein, L7.</title>
        <authorList>
            <person name="Murray J.M."/>
            <person name="Watts F.Z."/>
        </authorList>
    </citation>
    <scope>NUCLEOTIDE SEQUENCE [GENOMIC DNA]</scope>
</reference>
<reference key="2">
    <citation type="journal article" date="2002" name="Nature">
        <title>The genome sequence of Schizosaccharomyces pombe.</title>
        <authorList>
            <person name="Wood V."/>
            <person name="Gwilliam R."/>
            <person name="Rajandream M.A."/>
            <person name="Lyne M.H."/>
            <person name="Lyne R."/>
            <person name="Stewart A."/>
            <person name="Sgouros J.G."/>
            <person name="Peat N."/>
            <person name="Hayles J."/>
            <person name="Baker S.G."/>
            <person name="Basham D."/>
            <person name="Bowman S."/>
            <person name="Brooks K."/>
            <person name="Brown D."/>
            <person name="Brown S."/>
            <person name="Chillingworth T."/>
            <person name="Churcher C.M."/>
            <person name="Collins M."/>
            <person name="Connor R."/>
            <person name="Cronin A."/>
            <person name="Davis P."/>
            <person name="Feltwell T."/>
            <person name="Fraser A."/>
            <person name="Gentles S."/>
            <person name="Goble A."/>
            <person name="Hamlin N."/>
            <person name="Harris D.E."/>
            <person name="Hidalgo J."/>
            <person name="Hodgson G."/>
            <person name="Holroyd S."/>
            <person name="Hornsby T."/>
            <person name="Howarth S."/>
            <person name="Huckle E.J."/>
            <person name="Hunt S."/>
            <person name="Jagels K."/>
            <person name="James K.D."/>
            <person name="Jones L."/>
            <person name="Jones M."/>
            <person name="Leather S."/>
            <person name="McDonald S."/>
            <person name="McLean J."/>
            <person name="Mooney P."/>
            <person name="Moule S."/>
            <person name="Mungall K.L."/>
            <person name="Murphy L.D."/>
            <person name="Niblett D."/>
            <person name="Odell C."/>
            <person name="Oliver K."/>
            <person name="O'Neil S."/>
            <person name="Pearson D."/>
            <person name="Quail M.A."/>
            <person name="Rabbinowitsch E."/>
            <person name="Rutherford K.M."/>
            <person name="Rutter S."/>
            <person name="Saunders D."/>
            <person name="Seeger K."/>
            <person name="Sharp S."/>
            <person name="Skelton J."/>
            <person name="Simmonds M.N."/>
            <person name="Squares R."/>
            <person name="Squares S."/>
            <person name="Stevens K."/>
            <person name="Taylor K."/>
            <person name="Taylor R.G."/>
            <person name="Tivey A."/>
            <person name="Walsh S.V."/>
            <person name="Warren T."/>
            <person name="Whitehead S."/>
            <person name="Woodward J.R."/>
            <person name="Volckaert G."/>
            <person name="Aert R."/>
            <person name="Robben J."/>
            <person name="Grymonprez B."/>
            <person name="Weltjens I."/>
            <person name="Vanstreels E."/>
            <person name="Rieger M."/>
            <person name="Schaefer M."/>
            <person name="Mueller-Auer S."/>
            <person name="Gabel C."/>
            <person name="Fuchs M."/>
            <person name="Duesterhoeft A."/>
            <person name="Fritzc C."/>
            <person name="Holzer E."/>
            <person name="Moestl D."/>
            <person name="Hilbert H."/>
            <person name="Borzym K."/>
            <person name="Langer I."/>
            <person name="Beck A."/>
            <person name="Lehrach H."/>
            <person name="Reinhardt R."/>
            <person name="Pohl T.M."/>
            <person name="Eger P."/>
            <person name="Zimmermann W."/>
            <person name="Wedler H."/>
            <person name="Wambutt R."/>
            <person name="Purnelle B."/>
            <person name="Goffeau A."/>
            <person name="Cadieu E."/>
            <person name="Dreano S."/>
            <person name="Gloux S."/>
            <person name="Lelaure V."/>
            <person name="Mottier S."/>
            <person name="Galibert F."/>
            <person name="Aves S.J."/>
            <person name="Xiang Z."/>
            <person name="Hunt C."/>
            <person name="Moore K."/>
            <person name="Hurst S.M."/>
            <person name="Lucas M."/>
            <person name="Rochet M."/>
            <person name="Gaillardin C."/>
            <person name="Tallada V.A."/>
            <person name="Garzon A."/>
            <person name="Thode G."/>
            <person name="Daga R.R."/>
            <person name="Cruzado L."/>
            <person name="Jimenez J."/>
            <person name="Sanchez M."/>
            <person name="del Rey F."/>
            <person name="Benito J."/>
            <person name="Dominguez A."/>
            <person name="Revuelta J.L."/>
            <person name="Moreno S."/>
            <person name="Armstrong J."/>
            <person name="Forsburg S.L."/>
            <person name="Cerutti L."/>
            <person name="Lowe T."/>
            <person name="McCombie W.R."/>
            <person name="Paulsen I."/>
            <person name="Potashkin J."/>
            <person name="Shpakovski G.V."/>
            <person name="Ussery D."/>
            <person name="Barrell B.G."/>
            <person name="Nurse P."/>
        </authorList>
    </citation>
    <scope>NUCLEOTIDE SEQUENCE [LARGE SCALE GENOMIC DNA]</scope>
    <source>
        <strain>972 / ATCC 24843</strain>
    </source>
</reference>
<reference key="3">
    <citation type="journal article" date="2006" name="Nat. Biotechnol.">
        <title>ORFeome cloning and global analysis of protein localization in the fission yeast Schizosaccharomyces pombe.</title>
        <authorList>
            <person name="Matsuyama A."/>
            <person name="Arai R."/>
            <person name="Yashiroda Y."/>
            <person name="Shirai A."/>
            <person name="Kamata A."/>
            <person name="Sekido S."/>
            <person name="Kobayashi Y."/>
            <person name="Hashimoto A."/>
            <person name="Hamamoto M."/>
            <person name="Hiraoka Y."/>
            <person name="Horinouchi S."/>
            <person name="Yoshida M."/>
        </authorList>
    </citation>
    <scope>SUBCELLULAR LOCATION [LARGE SCALE ANALYSIS]</scope>
</reference>
<comment type="function">
    <text evidence="1">Component of the ribosome, a large ribonucleoprotein complex responsible for the synthesis of proteins in the cell. The small ribosomal subunit (SSU) binds messenger RNAs (mRNAs) and translates the encoded message by selecting cognate aminoacyl-transfer RNA (tRNA) molecules. The large subunit (LSU) contains the ribosomal catalytic site termed the peptidyl transferase center (PTC), which catalyzes the formation of peptide bonds, thereby polymerizing the amino acids delivered by tRNAs into a polypeptide chain. The nascent polypeptides leave the ribosome through a tunnel in the LSU and interact with protein factors that function in enzymatic processing, targeting, and the membrane insertion of nascent chains at the exit of the ribosomal tunnel.</text>
</comment>
<comment type="subunit">
    <text evidence="1">Component of the small ribosomal subunit (SSU). Mature yeast ribosomes consist of a small (40S) and a large (60S) subunit. The 40S small subunit contains 1 molecule of ribosomal RNA (18S rRNA) and at least 33 different proteins. The large 60S subunit contains 3 rRNA molecules (25S, 5.8S and 5S rRNA) and at least 46 different proteins.</text>
</comment>
<comment type="subcellular location">
    <subcellularLocation>
        <location evidence="1">Cytoplasm</location>
    </subcellularLocation>
    <subcellularLocation>
        <location evidence="2">Nucleus</location>
        <location evidence="2">Nucleolus</location>
    </subcellularLocation>
</comment>
<comment type="miscellaneous">
    <text>There are 3 genes for uL30 in S.pombe.</text>
</comment>
<comment type="similarity">
    <text evidence="3">Belongs to the universal ribosomal protein uL30 family.</text>
</comment>
<name>RL7A_SCHPO</name>
<proteinExistence type="evidence at protein level"/>
<dbReference type="EMBL" id="X53575">
    <property type="protein sequence ID" value="CAA37639.1"/>
    <property type="molecule type" value="Genomic_DNA"/>
</dbReference>
<dbReference type="EMBL" id="CU329670">
    <property type="protein sequence ID" value="CAB65807.1"/>
    <property type="molecule type" value="Genomic_DNA"/>
</dbReference>
<dbReference type="PIR" id="S10991">
    <property type="entry name" value="R5BY7"/>
</dbReference>
<dbReference type="RefSeq" id="NP_593454.1">
    <property type="nucleotide sequence ID" value="NM_001018887.2"/>
</dbReference>
<dbReference type="PDB" id="8ESQ">
    <property type="method" value="EM"/>
    <property type="resolution" value="2.80 A"/>
    <property type="chains" value="t=1-249"/>
</dbReference>
<dbReference type="PDB" id="8ESR">
    <property type="method" value="EM"/>
    <property type="resolution" value="3.20 A"/>
    <property type="chains" value="t=1-249"/>
</dbReference>
<dbReference type="PDB" id="8ETG">
    <property type="method" value="EM"/>
    <property type="resolution" value="3.40 A"/>
    <property type="chains" value="t=1-249"/>
</dbReference>
<dbReference type="PDB" id="8ETH">
    <property type="method" value="EM"/>
    <property type="resolution" value="3.80 A"/>
    <property type="chains" value="t=1-249"/>
</dbReference>
<dbReference type="PDB" id="8ETI">
    <property type="method" value="EM"/>
    <property type="resolution" value="3.70 A"/>
    <property type="chains" value="t=1-249"/>
</dbReference>
<dbReference type="PDB" id="8EUP">
    <property type="method" value="EM"/>
    <property type="resolution" value="3.10 A"/>
    <property type="chains" value="t=1-249"/>
</dbReference>
<dbReference type="PDB" id="8EUY">
    <property type="method" value="EM"/>
    <property type="resolution" value="3.00 A"/>
    <property type="chains" value="t=1-249"/>
</dbReference>
<dbReference type="PDB" id="8EV3">
    <property type="method" value="EM"/>
    <property type="resolution" value="3.00 A"/>
    <property type="chains" value="t=1-249"/>
</dbReference>
<dbReference type="PDBsum" id="8ESQ"/>
<dbReference type="PDBsum" id="8ESR"/>
<dbReference type="PDBsum" id="8ETG"/>
<dbReference type="PDBsum" id="8ETH"/>
<dbReference type="PDBsum" id="8ETI"/>
<dbReference type="PDBsum" id="8EUP"/>
<dbReference type="PDBsum" id="8EUY"/>
<dbReference type="PDBsum" id="8EV3"/>
<dbReference type="SMR" id="P17937"/>
<dbReference type="BioGRID" id="279965">
    <property type="interactions" value="4"/>
</dbReference>
<dbReference type="FunCoup" id="P17937">
    <property type="interactions" value="178"/>
</dbReference>
<dbReference type="STRING" id="284812.P17937"/>
<dbReference type="PaxDb" id="4896-SPAC664.06.1"/>
<dbReference type="EnsemblFungi" id="SPAC664.06.1">
    <property type="protein sequence ID" value="SPAC664.06.1:pep"/>
    <property type="gene ID" value="SPAC664.06"/>
</dbReference>
<dbReference type="GeneID" id="2543548"/>
<dbReference type="KEGG" id="spo:2543548"/>
<dbReference type="PomBase" id="SPAC664.06">
    <property type="gene designation" value="rlp7"/>
</dbReference>
<dbReference type="VEuPathDB" id="FungiDB:SPAC664.06"/>
<dbReference type="eggNOG" id="KOG3184">
    <property type="taxonomic scope" value="Eukaryota"/>
</dbReference>
<dbReference type="HOGENOM" id="CLU_055156_0_2_1"/>
<dbReference type="InParanoid" id="P17937"/>
<dbReference type="OMA" id="NPNGHKK"/>
<dbReference type="PhylomeDB" id="P17937"/>
<dbReference type="PRO" id="PR:P17937"/>
<dbReference type="Proteomes" id="UP000002485">
    <property type="component" value="Chromosome I"/>
</dbReference>
<dbReference type="GO" id="GO:0022625">
    <property type="term" value="C:cytosolic large ribosomal subunit"/>
    <property type="evidence" value="ECO:0000318"/>
    <property type="project" value="GO_Central"/>
</dbReference>
<dbReference type="GO" id="GO:0005730">
    <property type="term" value="C:nucleolus"/>
    <property type="evidence" value="ECO:0007005"/>
    <property type="project" value="PomBase"/>
</dbReference>
<dbReference type="GO" id="GO:0030684">
    <property type="term" value="C:preribosome"/>
    <property type="evidence" value="ECO:0000314"/>
    <property type="project" value="PomBase"/>
</dbReference>
<dbReference type="GO" id="GO:0030687">
    <property type="term" value="C:preribosome, large subunit precursor"/>
    <property type="evidence" value="ECO:0000266"/>
    <property type="project" value="PomBase"/>
</dbReference>
<dbReference type="GO" id="GO:0003723">
    <property type="term" value="F:RNA binding"/>
    <property type="evidence" value="ECO:0000318"/>
    <property type="project" value="GO_Central"/>
</dbReference>
<dbReference type="GO" id="GO:0003735">
    <property type="term" value="F:structural constituent of ribosome"/>
    <property type="evidence" value="ECO:0000318"/>
    <property type="project" value="GO_Central"/>
</dbReference>
<dbReference type="GO" id="GO:1902626">
    <property type="term" value="P:assembly of large subunit precursor of preribosome"/>
    <property type="evidence" value="ECO:0000269"/>
    <property type="project" value="PomBase"/>
</dbReference>
<dbReference type="GO" id="GO:0000463">
    <property type="term" value="P:maturation of LSU-rRNA from tricistronic rRNA transcript (SSU-rRNA, 5.8S rRNA, LSU-rRNA)"/>
    <property type="evidence" value="ECO:0000318"/>
    <property type="project" value="GO_Central"/>
</dbReference>
<dbReference type="CDD" id="cd01657">
    <property type="entry name" value="Ribosomal_L7_archeal_euk"/>
    <property type="match status" value="1"/>
</dbReference>
<dbReference type="FunFam" id="1.10.15.30:FF:000001">
    <property type="entry name" value="60S ribosomal protein L7"/>
    <property type="match status" value="1"/>
</dbReference>
<dbReference type="FunFam" id="3.30.1390.20:FF:000003">
    <property type="entry name" value="60S ribosomal protein L7"/>
    <property type="match status" value="1"/>
</dbReference>
<dbReference type="Gene3D" id="3.30.1390.20">
    <property type="entry name" value="Ribosomal protein L30, ferredoxin-like fold domain"/>
    <property type="match status" value="1"/>
</dbReference>
<dbReference type="InterPro" id="IPR036919">
    <property type="entry name" value="Ribo_uL30_ferredoxin-like_sf"/>
</dbReference>
<dbReference type="InterPro" id="IPR039699">
    <property type="entry name" value="Ribosomal_uL30"/>
</dbReference>
<dbReference type="InterPro" id="IPR018038">
    <property type="entry name" value="Ribosomal_uL30_CS"/>
</dbReference>
<dbReference type="InterPro" id="IPR005998">
    <property type="entry name" value="Ribosomal_uL30_euk"/>
</dbReference>
<dbReference type="InterPro" id="IPR035808">
    <property type="entry name" value="Ribosomal_uL30_euk_arc"/>
</dbReference>
<dbReference type="InterPro" id="IPR016082">
    <property type="entry name" value="Ribosomal_uL30_ferredoxin-like"/>
</dbReference>
<dbReference type="InterPro" id="IPR012988">
    <property type="entry name" value="Ribosomal_uL30_N_euk"/>
</dbReference>
<dbReference type="NCBIfam" id="TIGR01310">
    <property type="entry name" value="uL30_euk"/>
    <property type="match status" value="1"/>
</dbReference>
<dbReference type="PANTHER" id="PTHR11524">
    <property type="entry name" value="60S RIBOSOMAL PROTEIN L7"/>
    <property type="match status" value="1"/>
</dbReference>
<dbReference type="PANTHER" id="PTHR11524:SF54">
    <property type="entry name" value="LARGE RIBOSOMAL SUBUNIT PROTEIN UL30A"/>
    <property type="match status" value="1"/>
</dbReference>
<dbReference type="Pfam" id="PF00327">
    <property type="entry name" value="Ribosomal_L30"/>
    <property type="match status" value="1"/>
</dbReference>
<dbReference type="Pfam" id="PF08079">
    <property type="entry name" value="Ribosomal_L30_N"/>
    <property type="match status" value="1"/>
</dbReference>
<dbReference type="SUPFAM" id="SSF55129">
    <property type="entry name" value="Ribosomal protein L30p/L7e"/>
    <property type="match status" value="1"/>
</dbReference>
<dbReference type="PROSITE" id="PS00634">
    <property type="entry name" value="RIBOSOMAL_L30"/>
    <property type="match status" value="1"/>
</dbReference>
<gene>
    <name type="primary">rlp7</name>
    <name type="synonym">rpl7a</name>
    <name type="ORF">SPAC664.06</name>
</gene>
<organism>
    <name type="scientific">Schizosaccharomyces pombe (strain 972 / ATCC 24843)</name>
    <name type="common">Fission yeast</name>
    <dbReference type="NCBI Taxonomy" id="284812"/>
    <lineage>
        <taxon>Eukaryota</taxon>
        <taxon>Fungi</taxon>
        <taxon>Dikarya</taxon>
        <taxon>Ascomycota</taxon>
        <taxon>Taphrinomycotina</taxon>
        <taxon>Schizosaccharomycetes</taxon>
        <taxon>Schizosaccharomycetales</taxon>
        <taxon>Schizosaccharomycetaceae</taxon>
        <taxon>Schizosaccharomyces</taxon>
    </lineage>
</organism>